<feature type="chain" id="PRO_1000147283" description="Nucleotide-binding protein BBR47_25280">
    <location>
        <begin position="1"/>
        <end position="163"/>
    </location>
</feature>
<comment type="function">
    <text evidence="1">Nucleotide-binding protein.</text>
</comment>
<comment type="similarity">
    <text evidence="1">Belongs to the YajQ family.</text>
</comment>
<protein>
    <recommendedName>
        <fullName evidence="1">Nucleotide-binding protein BBR47_25280</fullName>
    </recommendedName>
</protein>
<name>Y2528_BREBN</name>
<keyword id="KW-0547">Nucleotide-binding</keyword>
<keyword id="KW-1185">Reference proteome</keyword>
<dbReference type="EMBL" id="AP008955">
    <property type="protein sequence ID" value="BAH43505.1"/>
    <property type="molecule type" value="Genomic_DNA"/>
</dbReference>
<dbReference type="RefSeq" id="WP_012686210.1">
    <property type="nucleotide sequence ID" value="NC_012491.1"/>
</dbReference>
<dbReference type="SMR" id="C0ZCJ6"/>
<dbReference type="STRING" id="358681.BBR47_25280"/>
<dbReference type="KEGG" id="bbe:BBR47_25280"/>
<dbReference type="eggNOG" id="COG1666">
    <property type="taxonomic scope" value="Bacteria"/>
</dbReference>
<dbReference type="HOGENOM" id="CLU_099839_1_0_9"/>
<dbReference type="Proteomes" id="UP000001877">
    <property type="component" value="Chromosome"/>
</dbReference>
<dbReference type="GO" id="GO:0005829">
    <property type="term" value="C:cytosol"/>
    <property type="evidence" value="ECO:0007669"/>
    <property type="project" value="TreeGrafter"/>
</dbReference>
<dbReference type="GO" id="GO:0000166">
    <property type="term" value="F:nucleotide binding"/>
    <property type="evidence" value="ECO:0007669"/>
    <property type="project" value="TreeGrafter"/>
</dbReference>
<dbReference type="CDD" id="cd11740">
    <property type="entry name" value="YajQ_like"/>
    <property type="match status" value="1"/>
</dbReference>
<dbReference type="FunFam" id="3.30.70.990:FF:000002">
    <property type="entry name" value="UPF0234 protein LEP1GSC067_4943"/>
    <property type="match status" value="1"/>
</dbReference>
<dbReference type="FunFam" id="3.30.70.860:FF:000003">
    <property type="entry name" value="UPF0234 protein YBT020_06460"/>
    <property type="match status" value="1"/>
</dbReference>
<dbReference type="Gene3D" id="3.30.70.860">
    <property type="match status" value="1"/>
</dbReference>
<dbReference type="Gene3D" id="3.30.70.990">
    <property type="entry name" value="YajQ-like, domain 2"/>
    <property type="match status" value="1"/>
</dbReference>
<dbReference type="HAMAP" id="MF_00632">
    <property type="entry name" value="YajQ"/>
    <property type="match status" value="1"/>
</dbReference>
<dbReference type="InterPro" id="IPR007551">
    <property type="entry name" value="DUF520"/>
</dbReference>
<dbReference type="InterPro" id="IPR035571">
    <property type="entry name" value="UPF0234-like_C"/>
</dbReference>
<dbReference type="InterPro" id="IPR035570">
    <property type="entry name" value="UPF0234_N"/>
</dbReference>
<dbReference type="InterPro" id="IPR036183">
    <property type="entry name" value="YajQ-like_sf"/>
</dbReference>
<dbReference type="NCBIfam" id="NF003819">
    <property type="entry name" value="PRK05412.1"/>
    <property type="match status" value="1"/>
</dbReference>
<dbReference type="PANTHER" id="PTHR30476">
    <property type="entry name" value="UPF0234 PROTEIN YAJQ"/>
    <property type="match status" value="1"/>
</dbReference>
<dbReference type="PANTHER" id="PTHR30476:SF0">
    <property type="entry name" value="UPF0234 PROTEIN YAJQ"/>
    <property type="match status" value="1"/>
</dbReference>
<dbReference type="Pfam" id="PF04461">
    <property type="entry name" value="DUF520"/>
    <property type="match status" value="1"/>
</dbReference>
<dbReference type="SUPFAM" id="SSF89963">
    <property type="entry name" value="YajQ-like"/>
    <property type="match status" value="2"/>
</dbReference>
<sequence length="163" mass="18313">MSKESSFDIVSKVELAEVNNAIQTALKEIENRFDFKGSKSSISLEKEELVLVSDDDFKLSQVKDILLGKLVKRDVPIKNLDYGKIEPAAGGTVRQRAKLVQGIDKDNAKKINSIIKDTGLKVKTQIQDDQIRVTGKSKDELQQIINAIRKADLPLEVQFINYR</sequence>
<proteinExistence type="inferred from homology"/>
<evidence type="ECO:0000255" key="1">
    <source>
        <dbReference type="HAMAP-Rule" id="MF_00632"/>
    </source>
</evidence>
<accession>C0ZCJ6</accession>
<reference key="1">
    <citation type="submission" date="2005-03" db="EMBL/GenBank/DDBJ databases">
        <title>Brevibacillus brevis strain 47, complete genome.</title>
        <authorList>
            <person name="Hosoyama A."/>
            <person name="Yamada R."/>
            <person name="Hongo Y."/>
            <person name="Terui Y."/>
            <person name="Ankai A."/>
            <person name="Masuyama W."/>
            <person name="Sekiguchi M."/>
            <person name="Takeda T."/>
            <person name="Asano K."/>
            <person name="Ohji S."/>
            <person name="Ichikawa N."/>
            <person name="Narita S."/>
            <person name="Aoki N."/>
            <person name="Miura H."/>
            <person name="Matsushita S."/>
            <person name="Sekigawa T."/>
            <person name="Yamagata H."/>
            <person name="Yoshikawa H."/>
            <person name="Udaka S."/>
            <person name="Tanikawa S."/>
            <person name="Fujita N."/>
        </authorList>
    </citation>
    <scope>NUCLEOTIDE SEQUENCE [LARGE SCALE GENOMIC DNA]</scope>
    <source>
        <strain>47 / JCM 6285 / NBRC 100599</strain>
    </source>
</reference>
<organism>
    <name type="scientific">Brevibacillus brevis (strain 47 / JCM 6285 / NBRC 100599)</name>
    <dbReference type="NCBI Taxonomy" id="358681"/>
    <lineage>
        <taxon>Bacteria</taxon>
        <taxon>Bacillati</taxon>
        <taxon>Bacillota</taxon>
        <taxon>Bacilli</taxon>
        <taxon>Bacillales</taxon>
        <taxon>Paenibacillaceae</taxon>
        <taxon>Brevibacillus</taxon>
    </lineage>
</organism>
<gene>
    <name type="ordered locus">BBR47_25280</name>
</gene>